<organism>
    <name type="scientific">Mus musculus</name>
    <name type="common">Mouse</name>
    <dbReference type="NCBI Taxonomy" id="10090"/>
    <lineage>
        <taxon>Eukaryota</taxon>
        <taxon>Metazoa</taxon>
        <taxon>Chordata</taxon>
        <taxon>Craniata</taxon>
        <taxon>Vertebrata</taxon>
        <taxon>Euteleostomi</taxon>
        <taxon>Mammalia</taxon>
        <taxon>Eutheria</taxon>
        <taxon>Euarchontoglires</taxon>
        <taxon>Glires</taxon>
        <taxon>Rodentia</taxon>
        <taxon>Myomorpha</taxon>
        <taxon>Muroidea</taxon>
        <taxon>Muridae</taxon>
        <taxon>Murinae</taxon>
        <taxon>Mus</taxon>
        <taxon>Mus</taxon>
    </lineage>
</organism>
<keyword id="KW-0025">Alternative splicing</keyword>
<keyword id="KW-0121">Carboxypeptidase</keyword>
<keyword id="KW-0963">Cytoplasm</keyword>
<keyword id="KW-0225">Disease variant</keyword>
<keyword id="KW-0378">Hydrolase</keyword>
<keyword id="KW-0479">Metal-binding</keyword>
<keyword id="KW-0482">Metalloprotease</keyword>
<keyword id="KW-0496">Mitochondrion</keyword>
<keyword id="KW-0523">Neurodegeneration</keyword>
<keyword id="KW-0539">Nucleus</keyword>
<keyword id="KW-0597">Phosphoprotein</keyword>
<keyword id="KW-0645">Protease</keyword>
<keyword id="KW-1185">Reference proteome</keyword>
<keyword id="KW-0862">Zinc</keyword>
<feature type="chain" id="PRO_0000308691" description="Cytosolic carboxypeptidase 1">
    <location>
        <begin position="1"/>
        <end position="1218"/>
    </location>
</feature>
<feature type="domain" description="Peptidase M14" evidence="3">
    <location>
        <begin position="840"/>
        <end position="1130"/>
    </location>
</feature>
<feature type="region of interest" description="Disordered" evidence="4">
    <location>
        <begin position="476"/>
        <end position="512"/>
    </location>
</feature>
<feature type="region of interest" description="Disordered" evidence="4">
    <location>
        <begin position="590"/>
        <end position="617"/>
    </location>
</feature>
<feature type="region of interest" description="Disordered" evidence="4">
    <location>
        <begin position="1193"/>
        <end position="1218"/>
    </location>
</feature>
<feature type="compositionally biased region" description="Basic and acidic residues" evidence="4">
    <location>
        <begin position="477"/>
        <end position="499"/>
    </location>
</feature>
<feature type="active site" description="Proton donor/acceptor" evidence="3">
    <location>
        <position position="1094"/>
    </location>
</feature>
<feature type="binding site" evidence="3">
    <location>
        <position position="912"/>
    </location>
    <ligand>
        <name>Zn(2+)</name>
        <dbReference type="ChEBI" id="CHEBI:29105"/>
        <note>catalytic</note>
    </ligand>
</feature>
<feature type="binding site" evidence="3">
    <location>
        <position position="915"/>
    </location>
    <ligand>
        <name>Zn(2+)</name>
        <dbReference type="ChEBI" id="CHEBI:29105"/>
        <note>catalytic</note>
    </ligand>
</feature>
<feature type="binding site" evidence="3">
    <location>
        <position position="1009"/>
    </location>
    <ligand>
        <name>Zn(2+)</name>
        <dbReference type="ChEBI" id="CHEBI:29105"/>
        <note>catalytic</note>
    </ligand>
</feature>
<feature type="modified residue" description="Phosphoserine" evidence="2">
    <location>
        <position position="1160"/>
    </location>
</feature>
<feature type="splice variant" id="VSP_038804" description="In isoform 5." evidence="20">
    <location>
        <begin position="689"/>
        <end position="1218"/>
    </location>
</feature>
<feature type="splice variant" id="VSP_029045" description="In isoform 3." evidence="19">
    <original>GMQPLMYSVQEALNARPWWIRMGTD</original>
    <variation>EITSHEAQLPQADRRASPTTPSPSP</variation>
    <location>
        <begin position="771"/>
        <end position="795"/>
    </location>
</feature>
<feature type="splice variant" id="VSP_038803" description="In isoform 4." evidence="20">
    <original>GMQPLMYSVQEALNARPWW</original>
    <variation>DGEETCYKMIVVSTICCKD</variation>
    <location>
        <begin position="771"/>
        <end position="789"/>
    </location>
</feature>
<feature type="splice variant" id="VSP_038805" description="In isoform 4." evidence="20">
    <location>
        <begin position="790"/>
        <end position="1218"/>
    </location>
</feature>
<feature type="splice variant" id="VSP_029046" description="In isoform 3." evidence="19">
    <location>
        <begin position="796"/>
        <end position="1218"/>
    </location>
</feature>
<feature type="splice variant" id="VSP_029047" description="In isoform 2." evidence="19">
    <original>SPTTYVLDEDEPRFL</original>
    <variation>RTRGSSELQLFPAVL</variation>
    <location>
        <begin position="1160"/>
        <end position="1174"/>
    </location>
</feature>
<feature type="splice variant" id="VSP_029048" description="In isoform 2." evidence="19">
    <location>
        <begin position="1175"/>
        <end position="1218"/>
    </location>
</feature>
<feature type="sequence variant" description="In pcd; pcd(5J) mutant." evidence="7">
    <original>D</original>
    <variation>DD</variation>
    <location>
        <position position="832"/>
    </location>
</feature>
<feature type="mutagenesis site" description="Decreased tubulin deglutamylation." evidence="17">
    <original>Y</original>
    <variation>D</variation>
    <location>
        <position position="686"/>
    </location>
</feature>
<feature type="mutagenesis site" description="Decreased tubulin deglutamylation." evidence="17">
    <original>T</original>
    <variation>M</variation>
    <location>
        <position position="843"/>
    </location>
</feature>
<feature type="mutagenesis site" description="Decreased tubulin deglutamylation." evidence="17">
    <original>R</original>
    <variation>W</variation>
    <location>
        <position position="910"/>
    </location>
</feature>
<feature type="mutagenesis site" description="Abolishes ability to rescue Purkinje cell degeneration in pcd mice when expressed in a transgene." evidence="10 11 13">
    <original>H</original>
    <variation>A</variation>
    <location>
        <position position="912"/>
    </location>
</feature>
<feature type="mutagenesis site" description="Abolishes deglutamylase activity; when associated with Q-915." evidence="10 11 13">
    <original>H</original>
    <variation>S</variation>
    <location>
        <position position="912"/>
    </location>
</feature>
<feature type="mutagenesis site" description="Abolishes ability to rescue Purkinje cell degeneration in pcd mice when expressed in a transgene." evidence="10 11 13">
    <original>E</original>
    <variation>A</variation>
    <location>
        <position position="915"/>
    </location>
</feature>
<feature type="mutagenesis site" description="Abolishes deglutamylase activity; when associated with S-912." evidence="10 11 13">
    <original>E</original>
    <variation>Q</variation>
    <location>
        <position position="915"/>
    </location>
</feature>
<feature type="mutagenesis site" description="Abolishes ability to rescue Purkinje cell degeneration in pcd mice when expressed in a transgene." evidence="9">
    <original>NR</original>
    <variation>AA</variation>
    <location>
        <begin position="971"/>
        <end position="972"/>
    </location>
</feature>
<feature type="mutagenesis site" description="Decreased tubulin deglutamylation." evidence="17">
    <original>H</original>
    <variation>L</variation>
    <location>
        <position position="982"/>
    </location>
</feature>
<feature type="sequence conflict" description="In Ref. 1; AAG37102." evidence="23" ref="1">
    <original>A</original>
    <variation>V</variation>
    <location>
        <position position="237"/>
    </location>
</feature>
<feature type="sequence conflict" description="In Ref. 1; AAG37102." evidence="23" ref="1">
    <original>Q</original>
    <variation>R</variation>
    <location>
        <position position="274"/>
    </location>
</feature>
<feature type="sequence conflict" description="In Ref. 3; BC060633." evidence="23" ref="3">
    <original>V</original>
    <variation>A</variation>
    <location>
        <position position="380"/>
    </location>
</feature>
<feature type="sequence conflict" description="In Ref. 1; AAG37102." evidence="23" ref="1">
    <original>NAGMRKD</original>
    <variation>ERRNEEG</variation>
    <location>
        <begin position="542"/>
        <end position="548"/>
    </location>
</feature>
<feature type="sequence conflict" description="In Ref. 1; AAG37102." evidence="23" ref="1">
    <original>F</original>
    <variation>S</variation>
    <location>
        <position position="644"/>
    </location>
</feature>
<feature type="sequence conflict" description="In Ref. 1; AAG37102." evidence="23" ref="1">
    <original>D</original>
    <variation>G</variation>
    <location>
        <position position="969"/>
    </location>
</feature>
<feature type="sequence conflict" description="In Ref. 1; AAG37102." evidence="23" ref="1">
    <original>D</original>
    <variation>G</variation>
    <location>
        <position position="1043"/>
    </location>
</feature>
<feature type="sequence conflict" description="In Ref. 1; AAG37102." evidence="23" ref="1">
    <original>K</original>
    <variation>Q</variation>
    <location>
        <position position="1121"/>
    </location>
</feature>
<feature type="sequence conflict" description="In Ref. 2; BAC25412." evidence="23" ref="2">
    <original>L</original>
    <variation>I</variation>
    <location>
        <position position="1126"/>
    </location>
</feature>
<feature type="sequence conflict" description="In Ref. 2; BAB24963." evidence="23" ref="2">
    <original>D</original>
    <variation>G</variation>
    <location>
        <position position="1167"/>
    </location>
</feature>
<name>CBPC1_MOUSE</name>
<reference key="1">
    <citation type="journal article" date="2000" name="Mol. Cell. Neurosci.">
        <title>Regenerating motor neurons express Nna1, a novel ATP/GTP-binding protein related to zinc carboxypeptidases.</title>
        <authorList>
            <person name="Harris A."/>
            <person name="Morgan J.I."/>
            <person name="Pecot M."/>
            <person name="Soumare A."/>
            <person name="Osborne A."/>
            <person name="Soares H.D."/>
        </authorList>
    </citation>
    <scope>NUCLEOTIDE SEQUENCE [MRNA] (ISOFORM 1)</scope>
    <scope>SUBCELLULAR LOCATION</scope>
    <scope>INDUCTION BY AXON REGENERATION</scope>
    <scope>DEVELOPMENTAL STAGE</scope>
    <source>
        <strain>C57BL/6J</strain>
    </source>
</reference>
<reference key="2">
    <citation type="journal article" date="2005" name="Science">
        <title>The transcriptional landscape of the mammalian genome.</title>
        <authorList>
            <person name="Carninci P."/>
            <person name="Kasukawa T."/>
            <person name="Katayama S."/>
            <person name="Gough J."/>
            <person name="Frith M.C."/>
            <person name="Maeda N."/>
            <person name="Oyama R."/>
            <person name="Ravasi T."/>
            <person name="Lenhard B."/>
            <person name="Wells C."/>
            <person name="Kodzius R."/>
            <person name="Shimokawa K."/>
            <person name="Bajic V.B."/>
            <person name="Brenner S.E."/>
            <person name="Batalov S."/>
            <person name="Forrest A.R."/>
            <person name="Zavolan M."/>
            <person name="Davis M.J."/>
            <person name="Wilming L.G."/>
            <person name="Aidinis V."/>
            <person name="Allen J.E."/>
            <person name="Ambesi-Impiombato A."/>
            <person name="Apweiler R."/>
            <person name="Aturaliya R.N."/>
            <person name="Bailey T.L."/>
            <person name="Bansal M."/>
            <person name="Baxter L."/>
            <person name="Beisel K.W."/>
            <person name="Bersano T."/>
            <person name="Bono H."/>
            <person name="Chalk A.M."/>
            <person name="Chiu K.P."/>
            <person name="Choudhary V."/>
            <person name="Christoffels A."/>
            <person name="Clutterbuck D.R."/>
            <person name="Crowe M.L."/>
            <person name="Dalla E."/>
            <person name="Dalrymple B.P."/>
            <person name="de Bono B."/>
            <person name="Della Gatta G."/>
            <person name="di Bernardo D."/>
            <person name="Down T."/>
            <person name="Engstrom P."/>
            <person name="Fagiolini M."/>
            <person name="Faulkner G."/>
            <person name="Fletcher C.F."/>
            <person name="Fukushima T."/>
            <person name="Furuno M."/>
            <person name="Futaki S."/>
            <person name="Gariboldi M."/>
            <person name="Georgii-Hemming P."/>
            <person name="Gingeras T.R."/>
            <person name="Gojobori T."/>
            <person name="Green R.E."/>
            <person name="Gustincich S."/>
            <person name="Harbers M."/>
            <person name="Hayashi Y."/>
            <person name="Hensch T.K."/>
            <person name="Hirokawa N."/>
            <person name="Hill D."/>
            <person name="Huminiecki L."/>
            <person name="Iacono M."/>
            <person name="Ikeo K."/>
            <person name="Iwama A."/>
            <person name="Ishikawa T."/>
            <person name="Jakt M."/>
            <person name="Kanapin A."/>
            <person name="Katoh M."/>
            <person name="Kawasawa Y."/>
            <person name="Kelso J."/>
            <person name="Kitamura H."/>
            <person name="Kitano H."/>
            <person name="Kollias G."/>
            <person name="Krishnan S.P."/>
            <person name="Kruger A."/>
            <person name="Kummerfeld S.K."/>
            <person name="Kurochkin I.V."/>
            <person name="Lareau L.F."/>
            <person name="Lazarevic D."/>
            <person name="Lipovich L."/>
            <person name="Liu J."/>
            <person name="Liuni S."/>
            <person name="McWilliam S."/>
            <person name="Madan Babu M."/>
            <person name="Madera M."/>
            <person name="Marchionni L."/>
            <person name="Matsuda H."/>
            <person name="Matsuzawa S."/>
            <person name="Miki H."/>
            <person name="Mignone F."/>
            <person name="Miyake S."/>
            <person name="Morris K."/>
            <person name="Mottagui-Tabar S."/>
            <person name="Mulder N."/>
            <person name="Nakano N."/>
            <person name="Nakauchi H."/>
            <person name="Ng P."/>
            <person name="Nilsson R."/>
            <person name="Nishiguchi S."/>
            <person name="Nishikawa S."/>
            <person name="Nori F."/>
            <person name="Ohara O."/>
            <person name="Okazaki Y."/>
            <person name="Orlando V."/>
            <person name="Pang K.C."/>
            <person name="Pavan W.J."/>
            <person name="Pavesi G."/>
            <person name="Pesole G."/>
            <person name="Petrovsky N."/>
            <person name="Piazza S."/>
            <person name="Reed J."/>
            <person name="Reid J.F."/>
            <person name="Ring B.Z."/>
            <person name="Ringwald M."/>
            <person name="Rost B."/>
            <person name="Ruan Y."/>
            <person name="Salzberg S.L."/>
            <person name="Sandelin A."/>
            <person name="Schneider C."/>
            <person name="Schoenbach C."/>
            <person name="Sekiguchi K."/>
            <person name="Semple C.A."/>
            <person name="Seno S."/>
            <person name="Sessa L."/>
            <person name="Sheng Y."/>
            <person name="Shibata Y."/>
            <person name="Shimada H."/>
            <person name="Shimada K."/>
            <person name="Silva D."/>
            <person name="Sinclair B."/>
            <person name="Sperling S."/>
            <person name="Stupka E."/>
            <person name="Sugiura K."/>
            <person name="Sultana R."/>
            <person name="Takenaka Y."/>
            <person name="Taki K."/>
            <person name="Tammoja K."/>
            <person name="Tan S.L."/>
            <person name="Tang S."/>
            <person name="Taylor M.S."/>
            <person name="Tegner J."/>
            <person name="Teichmann S.A."/>
            <person name="Ueda H.R."/>
            <person name="van Nimwegen E."/>
            <person name="Verardo R."/>
            <person name="Wei C.L."/>
            <person name="Yagi K."/>
            <person name="Yamanishi H."/>
            <person name="Zabarovsky E."/>
            <person name="Zhu S."/>
            <person name="Zimmer A."/>
            <person name="Hide W."/>
            <person name="Bult C."/>
            <person name="Grimmond S.M."/>
            <person name="Teasdale R.D."/>
            <person name="Liu E.T."/>
            <person name="Brusic V."/>
            <person name="Quackenbush J."/>
            <person name="Wahlestedt C."/>
            <person name="Mattick J.S."/>
            <person name="Hume D.A."/>
            <person name="Kai C."/>
            <person name="Sasaki D."/>
            <person name="Tomaru Y."/>
            <person name="Fukuda S."/>
            <person name="Kanamori-Katayama M."/>
            <person name="Suzuki M."/>
            <person name="Aoki J."/>
            <person name="Arakawa T."/>
            <person name="Iida J."/>
            <person name="Imamura K."/>
            <person name="Itoh M."/>
            <person name="Kato T."/>
            <person name="Kawaji H."/>
            <person name="Kawagashira N."/>
            <person name="Kawashima T."/>
            <person name="Kojima M."/>
            <person name="Kondo S."/>
            <person name="Konno H."/>
            <person name="Nakano K."/>
            <person name="Ninomiya N."/>
            <person name="Nishio T."/>
            <person name="Okada M."/>
            <person name="Plessy C."/>
            <person name="Shibata K."/>
            <person name="Shiraki T."/>
            <person name="Suzuki S."/>
            <person name="Tagami M."/>
            <person name="Waki K."/>
            <person name="Watahiki A."/>
            <person name="Okamura-Oho Y."/>
            <person name="Suzuki H."/>
            <person name="Kawai J."/>
            <person name="Hayashizaki Y."/>
        </authorList>
    </citation>
    <scope>NUCLEOTIDE SEQUENCE [LARGE SCALE MRNA] (ISOFORMS 4 AND 5)</scope>
    <scope>NUCLEOTIDE SEQUENCE [LARGE SCALE MRNA] OF 1115-1218 (ISOFORM 1)</scope>
    <source>
        <strain>C57BL/6J</strain>
        <strain>NOD</strain>
        <tissue>Hippocampus</tissue>
        <tissue>Pancreas</tissue>
        <tissue>Testis</tissue>
    </source>
</reference>
<reference key="3">
    <citation type="journal article" date="2004" name="Genome Res.">
        <title>The status, quality, and expansion of the NIH full-length cDNA project: the Mammalian Gene Collection (MGC).</title>
        <authorList>
            <consortium name="The MGC Project Team"/>
        </authorList>
    </citation>
    <scope>NUCLEOTIDE SEQUENCE [LARGE SCALE MRNA] (ISOFORMS 2 AND 3)</scope>
    <source>
        <strain>C57BL/6J</strain>
        <tissue>Brain</tissue>
    </source>
</reference>
<reference key="4">
    <citation type="journal article" date="2002" name="Science">
        <title>Purkinje cell degeneration (pcd) phenotypes caused by mutations in the axotomy-induced gene, Nna1.</title>
        <authorList>
            <person name="Fernandez-Gonzalez A."/>
            <person name="La Spada A.R."/>
            <person name="Treadaway J."/>
            <person name="Higdon J.C."/>
            <person name="Harris B.S."/>
            <person name="Sidman R.L."/>
            <person name="Morgan J.I."/>
            <person name="Zuo J."/>
        </authorList>
    </citation>
    <scope>INVOLVEMENT IN PCD</scope>
    <scope>INDUCTION BY AXONAL REGENERATION</scope>
    <scope>TISSUE SPECIFICITY</scope>
</reference>
<reference key="5">
    <citation type="journal article" date="2010" name="Cell">
        <title>A tissue-specific atlas of mouse protein phosphorylation and expression.</title>
        <authorList>
            <person name="Huttlin E.L."/>
            <person name="Jedrychowski M.P."/>
            <person name="Elias J.E."/>
            <person name="Goswami T."/>
            <person name="Rad R."/>
            <person name="Beausoleil S.A."/>
            <person name="Villen J."/>
            <person name="Haas W."/>
            <person name="Sowa M.E."/>
            <person name="Gygi S.P."/>
        </authorList>
    </citation>
    <scope>IDENTIFICATION BY MASS SPECTROMETRY [LARGE SCALE ANALYSIS]</scope>
    <source>
        <tissue>Brain</tissue>
        <tissue>Heart</tissue>
        <tissue>Pancreas</tissue>
        <tissue>Testis</tissue>
    </source>
</reference>
<reference key="6">
    <citation type="journal article" date="2006" name="Mamm. Genome">
        <title>The Purkinje cell degeneration 5J mutation is a single amino acid insertion that destabilizes Nna1 protein.</title>
        <authorList>
            <person name="Chakrabarti L."/>
            <person name="Neal J.T."/>
            <person name="Miles M."/>
            <person name="Martinez R.A."/>
            <person name="Smith A.C."/>
            <person name="Sopher B.L."/>
            <person name="La Spada A.R."/>
        </authorList>
    </citation>
    <scope>VARIANT PCD ASP-832 INS</scope>
</reference>
<reference key="7">
    <citation type="journal article" date="2007" name="Brain Res.">
        <title>The Purkinje cell degeneration (pcd) mouse: an unexpected molecular link between neuronal degeneration and regeneration.</title>
        <authorList>
            <person name="Wang T."/>
            <person name="Morgan J.I."/>
        </authorList>
    </citation>
    <scope>INVOLVEMENT IN PCD</scope>
</reference>
<reference key="8">
    <citation type="journal article" date="2006" name="Mol. Cell. Neurosci.">
        <title>The carboxypeptidase-like substrate-binding site in Nna1 is essential for the rescue of the Purkinje cell degeneration (pcd) phenotype.</title>
        <authorList>
            <person name="Wang T."/>
            <person name="Parris J."/>
            <person name="Li L."/>
            <person name="Morgan J.I."/>
        </authorList>
    </citation>
    <scope>INVOLVEMENT IN PCD</scope>
    <scope>MUTAGENESIS OF 971-ASN-ARG-972</scope>
</reference>
<reference key="9">
    <citation type="journal article" date="2008" name="Vision Res.">
        <title>The zinc-binding domain of Nna1 is required to prevent retinal photoreceptor loss and cerebellar ataxia in Purkinje cell degeneration (pcd) mice.</title>
        <authorList>
            <person name="Chakrabarti L."/>
            <person name="Eng J."/>
            <person name="Martinez R.A."/>
            <person name="Jackson S."/>
            <person name="Huang J."/>
            <person name="Possin D.E."/>
            <person name="Sopher B.L."/>
            <person name="La Spada A.R."/>
        </authorList>
    </citation>
    <scope>INVOLVEMENT IN PCD</scope>
    <scope>MUTAGENESIS OF HIS-912 AND GLU-915</scope>
</reference>
<reference key="10">
    <citation type="journal article" date="2010" name="Cell">
        <title>A family of protein-deglutamylating enzymes associated with neurodegeneration.</title>
        <authorList>
            <person name="Rogowski K."/>
            <person name="van Dijk J."/>
            <person name="Magiera M.M."/>
            <person name="Bosc C."/>
            <person name="Deloulme J.C."/>
            <person name="Bosson A."/>
            <person name="Peris L."/>
            <person name="Gold N.D."/>
            <person name="Lacroix B."/>
            <person name="Grau M.B."/>
            <person name="Bec N."/>
            <person name="Larroque C."/>
            <person name="Desagher S."/>
            <person name="Holzer M."/>
            <person name="Andrieux A."/>
            <person name="Moutin M.J."/>
            <person name="Janke C."/>
        </authorList>
    </citation>
    <scope>FUNCTION</scope>
    <scope>CATALYTIC ACTIVITY</scope>
    <scope>TISSUE SPECIFICITY</scope>
    <scope>INVOLVEMENT IN PCD</scope>
    <scope>INTERACTION WITH MYLK</scope>
    <scope>MUTAGENESIS OF HIS-912 AND GLU-915</scope>
</reference>
<reference key="11">
    <citation type="journal article" date="2010" name="Neuron">
        <title>Mitochondrial dysfunction in NnaD mutant flies and Purkinje cell degeneration mice reveals a role for Nna proteins in neuronal bioenergetics.</title>
        <authorList>
            <person name="Chakrabarti L."/>
            <person name="Zahra R."/>
            <person name="Jackson S.M."/>
            <person name="Kazemi-Esfarjani P."/>
            <person name="Sopher B.L."/>
            <person name="Mason A.G."/>
            <person name="Toneff T."/>
            <person name="Ryu S."/>
            <person name="Shaffer S."/>
            <person name="Kansy J.W."/>
            <person name="Eng J."/>
            <person name="Merrihew G."/>
            <person name="MacCoss M.J."/>
            <person name="Murphy A."/>
            <person name="Goodlett D.R."/>
            <person name="Hook V."/>
            <person name="Bennett C.L."/>
            <person name="Pallanck L.J."/>
            <person name="La Spada A.R."/>
        </authorList>
    </citation>
    <scope>INVOLVEMENT IN PCD</scope>
    <scope>SUBCELLULAR LOCATION</scope>
    <scope>MUTAGENESIS OF HIS-912 AND GLU-915</scope>
</reference>
<reference key="12">
    <citation type="journal article" date="2010" name="Neuron">
        <title>Nna1 mediates Purkinje cell dendritic development via lysyl oxidase propeptide and NF-kappaB signaling.</title>
        <authorList>
            <person name="Li J."/>
            <person name="Gu X."/>
            <person name="Ma Y."/>
            <person name="Calicchio M.L."/>
            <person name="Kong D."/>
            <person name="Teng Y.D."/>
            <person name="Yu L."/>
            <person name="Crain A.M."/>
            <person name="Vartanian T.K."/>
            <person name="Pasqualini R."/>
            <person name="Arap W."/>
            <person name="Libermann T.A."/>
            <person name="Snyder E.Y."/>
            <person name="Sidman R.L."/>
        </authorList>
    </citation>
    <scope>INVOLVEMENT IN PCD</scope>
</reference>
<reference key="13">
    <citation type="journal article" date="2012" name="J. Biol. Chem.">
        <title>Cytosolic carboxypeptidase 1 is involved in processing alpha- and beta-tubulin.</title>
        <authorList>
            <person name="Berezniuk I."/>
            <person name="Vu H.T."/>
            <person name="Lyons P.J."/>
            <person name="Sironi J.J."/>
            <person name="Xiao H."/>
            <person name="Burd B."/>
            <person name="Setou M."/>
            <person name="Angeletti R.H."/>
            <person name="Ikegami K."/>
            <person name="Fricker L.D."/>
        </authorList>
    </citation>
    <scope>FUNCTION</scope>
    <scope>CATALYTIC ACTIVITY</scope>
    <scope>DISRUPTION PHENOTYPE</scope>
</reference>
<reference key="14">
    <citation type="journal article" date="2014" name="Mol. Biol. Cell">
        <title>The cytosolic carboxypeptidases CCP2 and CCP3 catalyze posttranslational removal of acidic amino acids.</title>
        <authorList>
            <person name="Tort O."/>
            <person name="Tanco S."/>
            <person name="Rocha C."/>
            <person name="Bieche I."/>
            <person name="Seixas C."/>
            <person name="Bosc C."/>
            <person name="Andrieux A."/>
            <person name="Moutin M.J."/>
            <person name="Aviles F.X."/>
            <person name="Lorenzo J."/>
            <person name="Janke C."/>
        </authorList>
    </citation>
    <scope>FUNCTION</scope>
    <scope>CATALYTIC ACTIVITY</scope>
    <scope>TISSUE SPECIFICITY</scope>
</reference>
<reference key="15">
    <citation type="journal article" date="2018" name="EMBO J.">
        <title>Loss of tubulin deglutamylase CCP1 causes infantile-onset neurodegeneration.</title>
        <authorList>
            <consortium name="Undiagnosed Diseases Network"/>
            <person name="Shashi V."/>
            <person name="Magiera M.M."/>
            <person name="Klein D."/>
            <person name="Zaki M."/>
            <person name="Schoch K."/>
            <person name="Rudnik-Schoeneborn S."/>
            <person name="Norman A."/>
            <person name="Lopes Abath Neto O."/>
            <person name="Dusl M."/>
            <person name="Yuan X."/>
            <person name="Bartesaghi L."/>
            <person name="De Marco P."/>
            <person name="Alfares A.A."/>
            <person name="Marom R."/>
            <person name="Arold S.T."/>
            <person name="Guzman-Vega F.J."/>
            <person name="Pena L.D."/>
            <person name="Smith E.C."/>
            <person name="Steinlin M."/>
            <person name="Babiker M.O."/>
            <person name="Mohassel P."/>
            <person name="Foley A.R."/>
            <person name="Donkervoort S."/>
            <person name="Kaur R."/>
            <person name="Ghosh P.S."/>
            <person name="Stanley V."/>
            <person name="Musaev D."/>
            <person name="Nava C."/>
            <person name="Mignot C."/>
            <person name="Keren B."/>
            <person name="Scala M."/>
            <person name="Tassano E."/>
            <person name="Picco P."/>
            <person name="Doneda P."/>
            <person name="Fiorillo C."/>
            <person name="Issa M.Y."/>
            <person name="Alassiri A."/>
            <person name="Alahmad A."/>
            <person name="Gerard A."/>
            <person name="Liu P."/>
            <person name="Yang Y."/>
            <person name="Ertl-Wagner B."/>
            <person name="Kranz P.G."/>
            <person name="Wentzensen I.M."/>
            <person name="Stucka R."/>
            <person name="Stong N."/>
            <person name="Allen A.S."/>
            <person name="Goldstein D.B."/>
            <person name="Schoser B."/>
            <person name="Roesler K.M."/>
            <person name="Alfadhel M."/>
            <person name="Capra V."/>
            <person name="Chrast R."/>
            <person name="Strom T.M."/>
            <person name="Kamsteeg E.J."/>
            <person name="Boennemann C.G."/>
            <person name="Gleeson J.G."/>
            <person name="Martini R."/>
            <person name="Janke C."/>
            <person name="Senderek J."/>
        </authorList>
    </citation>
    <scope>FUNCTION</scope>
    <scope>CATALYTIC ACTIVITY</scope>
    <scope>INVOLVEMENT IN PCD</scope>
    <scope>MUTAGENESIS OF TYR-686; THR-843; ARG-910 AND HIS-982</scope>
</reference>
<reference key="16">
    <citation type="journal article" date="2018" name="Nat. Commun.">
        <title>Klf4 glutamylation is required for cell reprogramming and early embryonic development in mice.</title>
        <authorList>
            <person name="Ye B."/>
            <person name="Liu B."/>
            <person name="Hao L."/>
            <person name="Zhu X."/>
            <person name="Yang L."/>
            <person name="Wang S."/>
            <person name="Xia P."/>
            <person name="Du Y."/>
            <person name="Meng S."/>
            <person name="Huang G."/>
            <person name="Qin X."/>
            <person name="Wang Y."/>
            <person name="Yan X."/>
            <person name="Li C."/>
            <person name="Hao J."/>
            <person name="Zhu P."/>
            <person name="He L."/>
            <person name="Tian Y."/>
            <person name="Fan Z."/>
        </authorList>
    </citation>
    <scope>FUNCTION</scope>
    <scope>CATALYTIC ACTIVITY</scope>
    <scope>DISRUPTION PHENOTYPE</scope>
</reference>
<accession>Q641K1</accession>
<accession>Q3TDS0</accession>
<accession>Q3V147</accession>
<accession>Q6P9R9</accession>
<accession>Q8C1K8</accession>
<accession>Q9D962</accession>
<accession>Q9EQI4</accession>
<sequence>MSKLKVVGEKSLTNSSRVVGLLAQLEKINTDSTESDTARYVTSKILHLAQSQEKTRREMTTKGSTGMEVLLSTLENTKDLQTVLNILSILIELVSSGGGRRASFLVAKGGSQILLQLLMNASKDSPPHEEVMVQTHSILAKIGPKDKKFGVKARVNGALTVTLNLVKQHFQNYRLVLPCLQLLRVYSTNSVNSVSLGKNGVVELMFKIIGPFSKKNSGLMKVALDTLAALLKSKTNARRAVDRGYVQVLLTIYVDWHRHDNRHRNMLIRKGILQSLKSVTNIKLGRKAFIDANGMKILYNTSQECLAVRTLDPLVNTSSLIMRKCFPKNRLPLPTIKSSFHFQLPIIPVTGPVAQLYSLPPEVDDVVDESDDNDDIDLEVENELENEDDLDQSFKNDDIETDINKLRPQQVPGRTIEELKMYEHLFPELVDDFQDYELISKEPKPFVFEGKARGPIVVPTAGEEVPGNSGSVKKGVVMKERASPKGEEAKEDPKGHDRTLPQQLGGQSRVAPSAHSFNNDLVKALDRITLQNVPSQVASGLNAGMRKDFGLPLTVLSCTKACPHVAKCGSTLFEGRTVHLGKLCCTGVETEDDEDTESHSSTEQAPSVEASDGPTLHDPDLYIEIVKNTKSVPEYSEVAYPDYFGHIPPPFKEPILERPYGVQRTKIAQDIERLIHQNDIIDRVVYDLDNPTYTTPEEGDTLKFNSKFESGNLRKVIQIRKSEYDLILNSDINSNHYHQWFYFEVSGMRPGVAYRFNIINCEKSNSQFNYGMQPLMYSVQEALNARPWWIRMGTDICYYKNHFSRSSVAAGGQKGKSYYTITFTVNFPHKDDVCYFAYHYPYTYSTLQMHLQKLESAHNPQQIYFRKDVLCETLSGNICPLVTITAMPESNYYEHICQFRTRPYIFLSARVHPGETNASWVMKGTLEYLMSNSPTAQSLRESYIFKIVPMLNPDGVINGNHRCSLSGEDLNRQWQSPNPELHPTIYHAKGLLQYLAAVKRLPLVYCDYHGHSRKKNVFMYGCSIKETVWHTHDNSASCDIVEDMGYRTLPKILSHIAPAFCMSSCSFVVEKSKESTARVVVWREIGVQRSYTMESTLCGCDQGRYKGLQIGTRELEEMGAKFCVGLLRLKRLTSSLEYNLPSNLLDFENDLIESSCKVTSPTTYVLDEDEPRFLEEVDYSAESNDELDVELAENTGDYEPSAQEEALSDSEVSRTHLI</sequence>
<comment type="function">
    <text evidence="13 14 15 16 17">Metallocarboxypeptidase that mediates protein deglutamylation of tubulin and non-tubulin target proteins (PubMed:21074048, PubMed:22170066, PubMed:25103237, PubMed:29593216, PubMed:30420557). Catalyzes the removal of polyglutamate side chains present on the gamma-carboxyl group of glutamate residues within the C-terminal tail of alpha- and beta-tubulin (PubMed:22170066, PubMed:25103237, PubMed:30420557). Specifically cleaves tubulin long-side-chains, while it is not able to remove the branching point glutamate (PubMed:21074048). Also catalyzes the removal of polyglutamate residues from the carboxy-terminus of alpha-tubulin as well as non-tubulin proteins such as MYLK (PubMed:21074048, PubMed:22170066). Involved in KLF4 deglutamylation which promotes KLF4 proteasome-mediated degradation, thereby negatively regulating cell pluripotency maintenance and embryogenesis (PubMed:29593216).</text>
</comment>
<comment type="catalytic activity">
    <reaction evidence="13 14 15 16 17">
        <text>(L-glutamyl)(n+1)-gamma-L-glutamyl-L-glutamyl-[protein] + H2O = (L-glutamyl)(n)-gamma-L-glutamyl-L-glutamyl-[protein] + L-glutamate</text>
        <dbReference type="Rhea" id="RHEA:60004"/>
        <dbReference type="Rhea" id="RHEA-COMP:15519"/>
        <dbReference type="Rhea" id="RHEA-COMP:15675"/>
        <dbReference type="ChEBI" id="CHEBI:15377"/>
        <dbReference type="ChEBI" id="CHEBI:29985"/>
        <dbReference type="ChEBI" id="CHEBI:143623"/>
    </reaction>
    <physiologicalReaction direction="left-to-right" evidence="24 25 26 27 28">
        <dbReference type="Rhea" id="RHEA:60005"/>
    </physiologicalReaction>
</comment>
<comment type="catalytic activity">
    <reaction evidence="13 14">
        <text>C-terminal L-alpha-aminoacyl-L-glutamyl-L-glutamyl-[tubulin] + H2O = C-terminal L-alpha-aminoacyl-L-glutamyl-[tubulin] + L-glutamate</text>
        <dbReference type="Rhea" id="RHEA:63792"/>
        <dbReference type="Rhea" id="RHEA-COMP:16435"/>
        <dbReference type="Rhea" id="RHEA-COMP:16436"/>
        <dbReference type="ChEBI" id="CHEBI:15377"/>
        <dbReference type="ChEBI" id="CHEBI:29985"/>
        <dbReference type="ChEBI" id="CHEBI:149555"/>
        <dbReference type="ChEBI" id="CHEBI:149556"/>
        <dbReference type="EC" id="3.4.17.24"/>
    </reaction>
    <physiologicalReaction direction="left-to-right" evidence="24 25">
        <dbReference type="Rhea" id="RHEA:63793"/>
    </physiologicalReaction>
</comment>
<comment type="cofactor">
    <cofactor evidence="1">
        <name>Zn(2+)</name>
        <dbReference type="ChEBI" id="CHEBI:29105"/>
    </cofactor>
    <text evidence="1">Binds 1 zinc ion per subunit.</text>
</comment>
<comment type="subunit">
    <text evidence="13">Interacts with MYLK.</text>
</comment>
<comment type="subcellular location">
    <subcellularLocation>
        <location evidence="2">Cytoplasm</location>
    </subcellularLocation>
    <subcellularLocation>
        <location evidence="5">Cytoplasm</location>
        <location evidence="5">Cytosol</location>
    </subcellularLocation>
    <subcellularLocation>
        <location evidence="5">Nucleus</location>
    </subcellularLocation>
    <subcellularLocation>
        <location evidence="11">Mitochondrion</location>
    </subcellularLocation>
    <text evidence="2">Localizes in both the cytoplasm and nuclei of interphase and dividing cells.</text>
</comment>
<comment type="alternative products">
    <event type="alternative splicing"/>
    <isoform>
        <id>Q641K1-1</id>
        <name>1</name>
        <sequence type="displayed"/>
    </isoform>
    <isoform>
        <id>Q641K1-2</id>
        <name>2</name>
        <sequence type="described" ref="VSP_029047 VSP_029048"/>
    </isoform>
    <isoform>
        <id>Q641K1-3</id>
        <name>3</name>
        <sequence type="described" ref="VSP_029045 VSP_029046"/>
    </isoform>
    <isoform>
        <id>Q641K1-4</id>
        <name>4</name>
        <sequence type="described" ref="VSP_038803 VSP_038805"/>
    </isoform>
    <isoform>
        <id>Q641K1-5</id>
        <name>5</name>
        <sequence type="described" ref="VSP_038804"/>
    </isoform>
</comment>
<comment type="tissue specificity">
    <text evidence="6 13 15">Widely expressed. Highly expressed in the cerebellum and cortex of adult mouse brain. Expressed at similar levels in both the cerebellum and the cortex throughout all developmental stages. Also expressed in sciatic nerve transection, spinal motor neurons undergoing axon regeneration, testis, heart, eye, lung, pancreas, intestine, stomach, pituitary, spleen, adrenal, kidney and in developing brain. Expression in cranial motor nuclei is the same as that observed in uninjured primary motor neurons. Expression is prevalent in sensory neurons and hippocampal CA3 neurons in addition to regenerating motor neurons.</text>
</comment>
<comment type="developmental stage">
    <text evidence="5">Highly expressed in differentiating neurons. From 16.5 dpc, expression is widespread in brain, spinal cord, and peripheral nervous tissue. Within the developing CNS, expression is restricted to regions of brain and spinal cord containing differentiating neurons.</text>
</comment>
<comment type="induction">
    <text evidence="5 6">By axonal regeneration.</text>
</comment>
<comment type="disease">
    <text evidence="6 7 8 9 10 11 12 13 17">Defects in Agtpbp1 are the cause of Purkinje cell degeneration (pcd). Pcd is a spontaneous mutation that results in adult-onset degeneration of cerebellar Purkinje neurons, retinal photoreceptors, olfactory bulb mitral neurons and selected thalamic neurons, and causes defective spermatogenesis. Pcd mice also manifest cerebellar atrophy and a peripheral nerve degeneration resulting in pure motor or motor-predominant neuropathy. Motoric femoral quadriceps nerves are characterized by reduced total calibers, a loss of myelinated axons, perturbed axon morphology, and macrophage activation. The amount of motor neurons in the ventral horns of lumbar spinal cords is reduced. These anomalies are accompanied by dysregulated tubulin polyglutamylation (PubMed:30420557). Defects in mitochondrial metabolic functions are also observed. The molecular causes of neurodegeneration are probably due to an accumulation of glutamylation, either tubulin hyperglutamylation or another hyperglutamylated target proteins. An increase of intranuclear localization of lysyl oxidase (Lox) propeptide, which interferes with NF-kappa-B Rela signaling and microtubule-associated protein regulation of microtubule stability is also observed, possibly leading to underdevelopment of Purkinje cell dendrites.</text>
</comment>
<comment type="disruption phenotype">
    <text evidence="14 16">Knockout pcd mice show hyperglutamylation of alpha- and beta-tubulins in the brain (PubMed:22170066). Knockout mice promote somatic cell reprogramming and higher litter size at birth (PubMed:29593216).</text>
</comment>
<comment type="miscellaneous">
    <molecule>Isoform 3</molecule>
    <text evidence="23">Apparent retained intron. May be produced at very low levels due to a premature stop codon in the mRNA, leading to nonsense-mediated mRNA decay.</text>
</comment>
<comment type="similarity">
    <text evidence="23">Belongs to the peptidase M14 family.</text>
</comment>
<comment type="sequence caution" evidence="23">
    <conflict type="erroneous initiation">
        <sequence resource="EMBL-CDS" id="AAG37102"/>
    </conflict>
    <text>Truncated N-terminus.</text>
</comment>
<protein>
    <recommendedName>
        <fullName evidence="21">Cytosolic carboxypeptidase 1</fullName>
        <ecNumber evidence="13 14 15 16 17">3.4.17.-</ecNumber>
        <ecNumber evidence="13 14">3.4.17.24</ecNumber>
    </recommendedName>
    <alternativeName>
        <fullName>ATP/GTP-binding protein 1</fullName>
    </alternativeName>
    <alternativeName>
        <fullName evidence="18">Nervous system nuclear protein induced by axotomy protein 1</fullName>
    </alternativeName>
    <alternativeName>
        <fullName evidence="23">Protein deglutamylase CCP1</fullName>
    </alternativeName>
</protein>
<evidence type="ECO:0000250" key="1"/>
<evidence type="ECO:0000250" key="2">
    <source>
        <dbReference type="UniProtKB" id="Q9UPW5"/>
    </source>
</evidence>
<evidence type="ECO:0000255" key="3">
    <source>
        <dbReference type="PROSITE-ProRule" id="PRU01379"/>
    </source>
</evidence>
<evidence type="ECO:0000256" key="4">
    <source>
        <dbReference type="SAM" id="MobiDB-lite"/>
    </source>
</evidence>
<evidence type="ECO:0000269" key="5">
    <source>
    </source>
</evidence>
<evidence type="ECO:0000269" key="6">
    <source>
    </source>
</evidence>
<evidence type="ECO:0000269" key="7">
    <source>
    </source>
</evidence>
<evidence type="ECO:0000269" key="8">
    <source>
    </source>
</evidence>
<evidence type="ECO:0000269" key="9">
    <source>
    </source>
</evidence>
<evidence type="ECO:0000269" key="10">
    <source>
    </source>
</evidence>
<evidence type="ECO:0000269" key="11">
    <source>
    </source>
</evidence>
<evidence type="ECO:0000269" key="12">
    <source>
    </source>
</evidence>
<evidence type="ECO:0000269" key="13">
    <source>
    </source>
</evidence>
<evidence type="ECO:0000269" key="14">
    <source>
    </source>
</evidence>
<evidence type="ECO:0000269" key="15">
    <source>
    </source>
</evidence>
<evidence type="ECO:0000269" key="16">
    <source>
    </source>
</evidence>
<evidence type="ECO:0000269" key="17">
    <source>
    </source>
</evidence>
<evidence type="ECO:0000303" key="18">
    <source>
    </source>
</evidence>
<evidence type="ECO:0000303" key="19">
    <source>
    </source>
</evidence>
<evidence type="ECO:0000303" key="20">
    <source>
    </source>
</evidence>
<evidence type="ECO:0000303" key="21">
    <source>
    </source>
</evidence>
<evidence type="ECO:0000303" key="22">
    <source>
    </source>
</evidence>
<evidence type="ECO:0000305" key="23"/>
<evidence type="ECO:0000305" key="24">
    <source>
    </source>
</evidence>
<evidence type="ECO:0000305" key="25">
    <source>
    </source>
</evidence>
<evidence type="ECO:0000305" key="26">
    <source>
    </source>
</evidence>
<evidence type="ECO:0000305" key="27">
    <source>
    </source>
</evidence>
<evidence type="ECO:0000305" key="28">
    <source>
    </source>
</evidence>
<evidence type="ECO:0000312" key="29">
    <source>
        <dbReference type="MGI" id="MGI:2159437"/>
    </source>
</evidence>
<gene>
    <name evidence="29" type="primary">Agtpbp1</name>
    <name evidence="22" type="synonym">Ccp1</name>
    <name evidence="18" type="synonym">Nna1</name>
</gene>
<proteinExistence type="evidence at protein level"/>
<dbReference type="EC" id="3.4.17.-" evidence="13 14 15 16 17"/>
<dbReference type="EC" id="3.4.17.24" evidence="13 14"/>
<dbReference type="EMBL" id="AF219141">
    <property type="protein sequence ID" value="AAG37102.1"/>
    <property type="status" value="ALT_INIT"/>
    <property type="molecule type" value="mRNA"/>
</dbReference>
<dbReference type="EMBL" id="AK007328">
    <property type="protein sequence ID" value="BAB24963.2"/>
    <property type="molecule type" value="mRNA"/>
</dbReference>
<dbReference type="EMBL" id="AK013688">
    <property type="protein sequence ID" value="BAC25412.1"/>
    <property type="molecule type" value="mRNA"/>
</dbReference>
<dbReference type="EMBL" id="AK132695">
    <property type="protein sequence ID" value="BAE21306.1"/>
    <property type="molecule type" value="mRNA"/>
</dbReference>
<dbReference type="EMBL" id="AK170046">
    <property type="protein sequence ID" value="BAE41530.1"/>
    <property type="molecule type" value="mRNA"/>
</dbReference>
<dbReference type="EMBL" id="BC082335">
    <property type="protein sequence ID" value="AAH82335.1"/>
    <property type="molecule type" value="mRNA"/>
</dbReference>
<dbReference type="EMBL" id="BC060633">
    <property type="status" value="NOT_ANNOTATED_CDS"/>
    <property type="molecule type" value="mRNA"/>
</dbReference>
<dbReference type="CCDS" id="CCDS36686.1">
    <molecule id="Q641K1-1"/>
</dbReference>
<dbReference type="CCDS" id="CCDS36687.1">
    <molecule id="Q641K1-4"/>
</dbReference>
<dbReference type="CCDS" id="CCDS70470.1">
    <molecule id="Q641K1-2"/>
</dbReference>
<dbReference type="RefSeq" id="NP_001041473.1">
    <molecule id="Q641K1-4"/>
    <property type="nucleotide sequence ID" value="NM_001048008.2"/>
</dbReference>
<dbReference type="RefSeq" id="NP_001271147.1">
    <molecule id="Q641K1-4"/>
    <property type="nucleotide sequence ID" value="NM_001284218.1"/>
</dbReference>
<dbReference type="RefSeq" id="NP_001271148.1">
    <property type="nucleotide sequence ID" value="NM_001284219.1"/>
</dbReference>
<dbReference type="RefSeq" id="NP_001271150.1">
    <molecule id="Q641K1-2"/>
    <property type="nucleotide sequence ID" value="NM_001284221.2"/>
</dbReference>
<dbReference type="RefSeq" id="NP_001364026.1">
    <molecule id="Q641K1-1"/>
    <property type="nucleotide sequence ID" value="NM_001377097.1"/>
</dbReference>
<dbReference type="RefSeq" id="NP_075817.2">
    <molecule id="Q641K1-1"/>
    <property type="nucleotide sequence ID" value="NM_023328.3"/>
</dbReference>
<dbReference type="RefSeq" id="XP_006517398.1">
    <property type="nucleotide sequence ID" value="XM_006517335.2"/>
</dbReference>
<dbReference type="RefSeq" id="XP_006517399.1">
    <molecule id="Q641K1-1"/>
    <property type="nucleotide sequence ID" value="XM_006517336.4"/>
</dbReference>
<dbReference type="RefSeq" id="XP_006517400.1">
    <molecule id="Q641K1-1"/>
    <property type="nucleotide sequence ID" value="XM_006517337.5"/>
</dbReference>
<dbReference type="RefSeq" id="XP_006517401.1">
    <molecule id="Q641K1-1"/>
    <property type="nucleotide sequence ID" value="XM_006517338.5"/>
</dbReference>
<dbReference type="RefSeq" id="XP_011242857.1">
    <property type="nucleotide sequence ID" value="XM_011244555.2"/>
</dbReference>
<dbReference type="RefSeq" id="XP_036014026.1">
    <molecule id="Q641K1-1"/>
    <property type="nucleotide sequence ID" value="XM_036158133.1"/>
</dbReference>
<dbReference type="SMR" id="Q641K1"/>
<dbReference type="BioGRID" id="212061">
    <property type="interactions" value="4"/>
</dbReference>
<dbReference type="FunCoup" id="Q641K1">
    <property type="interactions" value="3515"/>
</dbReference>
<dbReference type="STRING" id="10090.ENSMUSP00000022040"/>
<dbReference type="MEROPS" id="M14.028"/>
<dbReference type="iPTMnet" id="Q641K1"/>
<dbReference type="PhosphoSitePlus" id="Q641K1"/>
<dbReference type="PaxDb" id="10090-ENSMUSP00000022040"/>
<dbReference type="ProteomicsDB" id="281226">
    <molecule id="Q641K1-1"/>
</dbReference>
<dbReference type="ProteomicsDB" id="281227">
    <molecule id="Q641K1-2"/>
</dbReference>
<dbReference type="ProteomicsDB" id="281228">
    <molecule id="Q641K1-3"/>
</dbReference>
<dbReference type="ProteomicsDB" id="281229">
    <molecule id="Q641K1-4"/>
</dbReference>
<dbReference type="ProteomicsDB" id="281230">
    <molecule id="Q641K1-5"/>
</dbReference>
<dbReference type="Pumba" id="Q641K1"/>
<dbReference type="Antibodypedia" id="27717">
    <property type="antibodies" value="352 antibodies from 30 providers"/>
</dbReference>
<dbReference type="DNASU" id="67269"/>
<dbReference type="Ensembl" id="ENSMUST00000022040.14">
    <molecule id="Q641K1-1"/>
    <property type="protein sequence ID" value="ENSMUSP00000022040.7"/>
    <property type="gene ID" value="ENSMUSG00000021557.16"/>
</dbReference>
<dbReference type="Ensembl" id="ENSMUST00000109830.9">
    <molecule id="Q641K1-4"/>
    <property type="protein sequence ID" value="ENSMUSP00000105456.3"/>
    <property type="gene ID" value="ENSMUSG00000021557.16"/>
</dbReference>
<dbReference type="Ensembl" id="ENSMUST00000164215.8">
    <molecule id="Q641K1-2"/>
    <property type="protein sequence ID" value="ENSMUSP00000130939.2"/>
    <property type="gene ID" value="ENSMUSG00000021557.16"/>
</dbReference>
<dbReference type="Ensembl" id="ENSMUST00000170555.8">
    <molecule id="Q641K1-3"/>
    <property type="protein sequence ID" value="ENSMUSP00000128589.2"/>
    <property type="gene ID" value="ENSMUSG00000021557.16"/>
</dbReference>
<dbReference type="Ensembl" id="ENSMUST00000171606.9">
    <molecule id="Q641K1-4"/>
    <property type="protein sequence ID" value="ENSMUSP00000132697.2"/>
    <property type="gene ID" value="ENSMUSG00000021557.16"/>
</dbReference>
<dbReference type="GeneID" id="67269"/>
<dbReference type="KEGG" id="mmu:67269"/>
<dbReference type="UCSC" id="uc007qum.1">
    <molecule id="Q641K1-1"/>
    <property type="organism name" value="mouse"/>
</dbReference>
<dbReference type="UCSC" id="uc007quq.2">
    <molecule id="Q641K1-4"/>
    <property type="organism name" value="mouse"/>
</dbReference>
<dbReference type="UCSC" id="uc033gmf.1">
    <molecule id="Q641K1-2"/>
    <property type="organism name" value="mouse"/>
</dbReference>
<dbReference type="AGR" id="MGI:2159437"/>
<dbReference type="CTD" id="23287"/>
<dbReference type="MGI" id="MGI:2159437">
    <property type="gene designation" value="Agtpbp1"/>
</dbReference>
<dbReference type="VEuPathDB" id="HostDB:ENSMUSG00000021557"/>
<dbReference type="eggNOG" id="KOG3641">
    <property type="taxonomic scope" value="Eukaryota"/>
</dbReference>
<dbReference type="GeneTree" id="ENSGT00940000157707"/>
<dbReference type="HOGENOM" id="CLU_007391_0_0_1"/>
<dbReference type="InParanoid" id="Q641K1"/>
<dbReference type="OMA" id="LEYNMPS"/>
<dbReference type="OrthoDB" id="10253041at2759"/>
<dbReference type="PhylomeDB" id="Q641K1"/>
<dbReference type="TreeFam" id="TF313794"/>
<dbReference type="BRENDA" id="3.4.17.24">
    <property type="organism ID" value="3474"/>
</dbReference>
<dbReference type="BioGRID-ORCS" id="67269">
    <property type="hits" value="3 hits in 77 CRISPR screens"/>
</dbReference>
<dbReference type="ChiTaRS" id="Agtpbp1">
    <property type="organism name" value="mouse"/>
</dbReference>
<dbReference type="PRO" id="PR:Q641K1"/>
<dbReference type="Proteomes" id="UP000000589">
    <property type="component" value="Chromosome 13"/>
</dbReference>
<dbReference type="RNAct" id="Q641K1">
    <property type="molecule type" value="protein"/>
</dbReference>
<dbReference type="Bgee" id="ENSMUSG00000021557">
    <property type="expression patterns" value="Expressed in spermatid and 262 other cell types or tissues"/>
</dbReference>
<dbReference type="ExpressionAtlas" id="Q641K1">
    <property type="expression patterns" value="baseline and differential"/>
</dbReference>
<dbReference type="GO" id="GO:1904115">
    <property type="term" value="C:axon cytoplasm"/>
    <property type="evidence" value="ECO:0007669"/>
    <property type="project" value="GOC"/>
</dbReference>
<dbReference type="GO" id="GO:0034451">
    <property type="term" value="C:centriolar satellite"/>
    <property type="evidence" value="ECO:0007669"/>
    <property type="project" value="Ensembl"/>
</dbReference>
<dbReference type="GO" id="GO:0036064">
    <property type="term" value="C:ciliary basal body"/>
    <property type="evidence" value="ECO:0007669"/>
    <property type="project" value="Ensembl"/>
</dbReference>
<dbReference type="GO" id="GO:0005737">
    <property type="term" value="C:cytoplasm"/>
    <property type="evidence" value="ECO:0000314"/>
    <property type="project" value="MGI"/>
</dbReference>
<dbReference type="GO" id="GO:0005829">
    <property type="term" value="C:cytosol"/>
    <property type="evidence" value="ECO:0000314"/>
    <property type="project" value="UniProtKB"/>
</dbReference>
<dbReference type="GO" id="GO:0005739">
    <property type="term" value="C:mitochondrion"/>
    <property type="evidence" value="ECO:0000314"/>
    <property type="project" value="UniProtKB"/>
</dbReference>
<dbReference type="GO" id="GO:0005654">
    <property type="term" value="C:nucleoplasm"/>
    <property type="evidence" value="ECO:0007669"/>
    <property type="project" value="Ensembl"/>
</dbReference>
<dbReference type="GO" id="GO:0005634">
    <property type="term" value="C:nucleus"/>
    <property type="evidence" value="ECO:0000314"/>
    <property type="project" value="MGI"/>
</dbReference>
<dbReference type="GO" id="GO:0005886">
    <property type="term" value="C:plasma membrane"/>
    <property type="evidence" value="ECO:0007669"/>
    <property type="project" value="Ensembl"/>
</dbReference>
<dbReference type="GO" id="GO:0004181">
    <property type="term" value="F:metallocarboxypeptidase activity"/>
    <property type="evidence" value="ECO:0000314"/>
    <property type="project" value="UniProtKB"/>
</dbReference>
<dbReference type="GO" id="GO:0008233">
    <property type="term" value="F:peptidase activity"/>
    <property type="evidence" value="ECO:0000304"/>
    <property type="project" value="UniProtKB"/>
</dbReference>
<dbReference type="GO" id="GO:0015631">
    <property type="term" value="F:tubulin binding"/>
    <property type="evidence" value="ECO:0000314"/>
    <property type="project" value="UniProtKB"/>
</dbReference>
<dbReference type="GO" id="GO:0008270">
    <property type="term" value="F:zinc ion binding"/>
    <property type="evidence" value="ECO:0007669"/>
    <property type="project" value="InterPro"/>
</dbReference>
<dbReference type="GO" id="GO:0007628">
    <property type="term" value="P:adult walking behavior"/>
    <property type="evidence" value="ECO:0000315"/>
    <property type="project" value="MGI"/>
</dbReference>
<dbReference type="GO" id="GO:0098957">
    <property type="term" value="P:anterograde axonal transport of mitochondrion"/>
    <property type="evidence" value="ECO:0000316"/>
    <property type="project" value="MGI"/>
</dbReference>
<dbReference type="GO" id="GO:0098930">
    <property type="term" value="P:axonal transport"/>
    <property type="evidence" value="ECO:0000316"/>
    <property type="project" value="MGI"/>
</dbReference>
<dbReference type="GO" id="GO:0035609">
    <property type="term" value="P:C-terminal protein deglutamylation"/>
    <property type="evidence" value="ECO:0000314"/>
    <property type="project" value="UniProtKB"/>
</dbReference>
<dbReference type="GO" id="GO:0021954">
    <property type="term" value="P:central nervous system neuron development"/>
    <property type="evidence" value="ECO:0000316"/>
    <property type="project" value="MGI"/>
</dbReference>
<dbReference type="GO" id="GO:0021702">
    <property type="term" value="P:cerebellar Purkinje cell differentiation"/>
    <property type="evidence" value="ECO:0000315"/>
    <property type="project" value="UniProtKB"/>
</dbReference>
<dbReference type="GO" id="GO:0021680">
    <property type="term" value="P:cerebellar Purkinje cell layer development"/>
    <property type="evidence" value="ECO:0000315"/>
    <property type="project" value="MGI"/>
</dbReference>
<dbReference type="GO" id="GO:0021549">
    <property type="term" value="P:cerebellum development"/>
    <property type="evidence" value="ECO:0000315"/>
    <property type="project" value="MGI"/>
</dbReference>
<dbReference type="GO" id="GO:0001754">
    <property type="term" value="P:eye photoreceptor cell differentiation"/>
    <property type="evidence" value="ECO:0000315"/>
    <property type="project" value="UniProtKB"/>
</dbReference>
<dbReference type="GO" id="GO:0007005">
    <property type="term" value="P:mitochondrion organization"/>
    <property type="evidence" value="ECO:0000315"/>
    <property type="project" value="UniProtKB"/>
</dbReference>
<dbReference type="GO" id="GO:0008285">
    <property type="term" value="P:negative regulation of cell population proliferation"/>
    <property type="evidence" value="ECO:0000315"/>
    <property type="project" value="MGI"/>
</dbReference>
<dbReference type="GO" id="GO:0050905">
    <property type="term" value="P:neuromuscular process"/>
    <property type="evidence" value="ECO:0000315"/>
    <property type="project" value="UniProtKB"/>
</dbReference>
<dbReference type="GO" id="GO:0021772">
    <property type="term" value="P:olfactory bulb development"/>
    <property type="evidence" value="ECO:0000315"/>
    <property type="project" value="UniProtKB"/>
</dbReference>
<dbReference type="GO" id="GO:2000060">
    <property type="term" value="P:positive regulation of ubiquitin-dependent protein catabolic process"/>
    <property type="evidence" value="ECO:0000315"/>
    <property type="project" value="MGI"/>
</dbReference>
<dbReference type="GO" id="GO:0035610">
    <property type="term" value="P:protein side chain deglutamylation"/>
    <property type="evidence" value="ECO:0000314"/>
    <property type="project" value="UniProtKB"/>
</dbReference>
<dbReference type="GO" id="GO:0006508">
    <property type="term" value="P:proteolysis"/>
    <property type="evidence" value="ECO:0007669"/>
    <property type="project" value="UniProtKB-KW"/>
</dbReference>
<dbReference type="GO" id="GO:0060041">
    <property type="term" value="P:retina development in camera-type eye"/>
    <property type="evidence" value="ECO:0000315"/>
    <property type="project" value="MGI"/>
</dbReference>
<dbReference type="GO" id="GO:0098958">
    <property type="term" value="P:retrograde axonal transport of mitochondrion"/>
    <property type="evidence" value="ECO:0000316"/>
    <property type="project" value="MGI"/>
</dbReference>
<dbReference type="CDD" id="cd06906">
    <property type="entry name" value="M14_Nna1"/>
    <property type="match status" value="1"/>
</dbReference>
<dbReference type="FunFam" id="3.40.630.10:FF:000024">
    <property type="entry name" value="ATP/GTP binding protein 1"/>
    <property type="match status" value="1"/>
</dbReference>
<dbReference type="FunFam" id="1.25.10.10:FF:000125">
    <property type="entry name" value="cytosolic carboxypeptidase 1 isoform X1"/>
    <property type="match status" value="1"/>
</dbReference>
<dbReference type="FunFam" id="2.60.40.3120:FF:000001">
    <property type="entry name" value="cytosolic carboxypeptidase 1 isoform X1"/>
    <property type="match status" value="1"/>
</dbReference>
<dbReference type="Gene3D" id="2.60.40.3120">
    <property type="match status" value="1"/>
</dbReference>
<dbReference type="Gene3D" id="1.25.10.10">
    <property type="entry name" value="Leucine-rich Repeat Variant"/>
    <property type="match status" value="1"/>
</dbReference>
<dbReference type="Gene3D" id="3.40.630.10">
    <property type="entry name" value="Zn peptidases"/>
    <property type="match status" value="1"/>
</dbReference>
<dbReference type="InterPro" id="IPR011989">
    <property type="entry name" value="ARM-like"/>
</dbReference>
<dbReference type="InterPro" id="IPR016024">
    <property type="entry name" value="ARM-type_fold"/>
</dbReference>
<dbReference type="InterPro" id="IPR033852">
    <property type="entry name" value="CBPC1/4"/>
</dbReference>
<dbReference type="InterPro" id="IPR050821">
    <property type="entry name" value="Cytosolic_carboxypeptidase"/>
</dbReference>
<dbReference type="InterPro" id="IPR040626">
    <property type="entry name" value="Pepdidase_M14_N"/>
</dbReference>
<dbReference type="InterPro" id="IPR000834">
    <property type="entry name" value="Peptidase_M14"/>
</dbReference>
<dbReference type="PANTHER" id="PTHR12756">
    <property type="entry name" value="CYTOSOLIC CARBOXYPEPTIDASE"/>
    <property type="match status" value="1"/>
</dbReference>
<dbReference type="PANTHER" id="PTHR12756:SF24">
    <property type="entry name" value="CYTOSOLIC CARBOXYPEPTIDASE 1"/>
    <property type="match status" value="1"/>
</dbReference>
<dbReference type="Pfam" id="PF18027">
    <property type="entry name" value="Pepdidase_M14_N"/>
    <property type="match status" value="1"/>
</dbReference>
<dbReference type="Pfam" id="PF00246">
    <property type="entry name" value="Peptidase_M14"/>
    <property type="match status" value="1"/>
</dbReference>
<dbReference type="SUPFAM" id="SSF48371">
    <property type="entry name" value="ARM repeat"/>
    <property type="match status" value="1"/>
</dbReference>
<dbReference type="SUPFAM" id="SSF53187">
    <property type="entry name" value="Zn-dependent exopeptidases"/>
    <property type="match status" value="1"/>
</dbReference>
<dbReference type="PROSITE" id="PS52035">
    <property type="entry name" value="PEPTIDASE_M14"/>
    <property type="match status" value="1"/>
</dbReference>